<dbReference type="EC" id="4.2.1.11" evidence="1"/>
<dbReference type="EMBL" id="CP001598">
    <property type="protein sequence ID" value="ACQ46859.1"/>
    <property type="molecule type" value="Genomic_DNA"/>
</dbReference>
<dbReference type="RefSeq" id="WP_000103949.1">
    <property type="nucleotide sequence ID" value="NC_012659.1"/>
</dbReference>
<dbReference type="SMR" id="C3P0A3"/>
<dbReference type="GeneID" id="83638809"/>
<dbReference type="KEGG" id="bai:BAA_5394"/>
<dbReference type="HOGENOM" id="CLU_031223_2_1_9"/>
<dbReference type="UniPathway" id="UPA00109">
    <property type="reaction ID" value="UER00187"/>
</dbReference>
<dbReference type="GO" id="GO:0009986">
    <property type="term" value="C:cell surface"/>
    <property type="evidence" value="ECO:0007669"/>
    <property type="project" value="UniProtKB-SubCell"/>
</dbReference>
<dbReference type="GO" id="GO:0005576">
    <property type="term" value="C:extracellular region"/>
    <property type="evidence" value="ECO:0007669"/>
    <property type="project" value="UniProtKB-SubCell"/>
</dbReference>
<dbReference type="GO" id="GO:0000015">
    <property type="term" value="C:phosphopyruvate hydratase complex"/>
    <property type="evidence" value="ECO:0007669"/>
    <property type="project" value="InterPro"/>
</dbReference>
<dbReference type="GO" id="GO:0000287">
    <property type="term" value="F:magnesium ion binding"/>
    <property type="evidence" value="ECO:0007669"/>
    <property type="project" value="UniProtKB-UniRule"/>
</dbReference>
<dbReference type="GO" id="GO:0004634">
    <property type="term" value="F:phosphopyruvate hydratase activity"/>
    <property type="evidence" value="ECO:0007669"/>
    <property type="project" value="UniProtKB-UniRule"/>
</dbReference>
<dbReference type="GO" id="GO:0006096">
    <property type="term" value="P:glycolytic process"/>
    <property type="evidence" value="ECO:0007669"/>
    <property type="project" value="UniProtKB-UniRule"/>
</dbReference>
<dbReference type="CDD" id="cd03313">
    <property type="entry name" value="enolase"/>
    <property type="match status" value="1"/>
</dbReference>
<dbReference type="FunFam" id="3.20.20.120:FF:000001">
    <property type="entry name" value="Enolase"/>
    <property type="match status" value="1"/>
</dbReference>
<dbReference type="FunFam" id="3.30.390.10:FF:000001">
    <property type="entry name" value="Enolase"/>
    <property type="match status" value="1"/>
</dbReference>
<dbReference type="Gene3D" id="3.20.20.120">
    <property type="entry name" value="Enolase-like C-terminal domain"/>
    <property type="match status" value="1"/>
</dbReference>
<dbReference type="Gene3D" id="3.30.390.10">
    <property type="entry name" value="Enolase-like, N-terminal domain"/>
    <property type="match status" value="1"/>
</dbReference>
<dbReference type="HAMAP" id="MF_00318">
    <property type="entry name" value="Enolase"/>
    <property type="match status" value="1"/>
</dbReference>
<dbReference type="InterPro" id="IPR000941">
    <property type="entry name" value="Enolase"/>
</dbReference>
<dbReference type="InterPro" id="IPR036849">
    <property type="entry name" value="Enolase-like_C_sf"/>
</dbReference>
<dbReference type="InterPro" id="IPR029017">
    <property type="entry name" value="Enolase-like_N"/>
</dbReference>
<dbReference type="InterPro" id="IPR020810">
    <property type="entry name" value="Enolase_C"/>
</dbReference>
<dbReference type="InterPro" id="IPR020809">
    <property type="entry name" value="Enolase_CS"/>
</dbReference>
<dbReference type="InterPro" id="IPR020811">
    <property type="entry name" value="Enolase_N"/>
</dbReference>
<dbReference type="NCBIfam" id="TIGR01060">
    <property type="entry name" value="eno"/>
    <property type="match status" value="1"/>
</dbReference>
<dbReference type="PANTHER" id="PTHR11902">
    <property type="entry name" value="ENOLASE"/>
    <property type="match status" value="1"/>
</dbReference>
<dbReference type="PANTHER" id="PTHR11902:SF1">
    <property type="entry name" value="ENOLASE"/>
    <property type="match status" value="1"/>
</dbReference>
<dbReference type="Pfam" id="PF00113">
    <property type="entry name" value="Enolase_C"/>
    <property type="match status" value="1"/>
</dbReference>
<dbReference type="Pfam" id="PF03952">
    <property type="entry name" value="Enolase_N"/>
    <property type="match status" value="1"/>
</dbReference>
<dbReference type="PIRSF" id="PIRSF001400">
    <property type="entry name" value="Enolase"/>
    <property type="match status" value="1"/>
</dbReference>
<dbReference type="PRINTS" id="PR00148">
    <property type="entry name" value="ENOLASE"/>
</dbReference>
<dbReference type="SFLD" id="SFLDS00001">
    <property type="entry name" value="Enolase"/>
    <property type="match status" value="1"/>
</dbReference>
<dbReference type="SFLD" id="SFLDF00002">
    <property type="entry name" value="enolase"/>
    <property type="match status" value="1"/>
</dbReference>
<dbReference type="SMART" id="SM01192">
    <property type="entry name" value="Enolase_C"/>
    <property type="match status" value="1"/>
</dbReference>
<dbReference type="SMART" id="SM01193">
    <property type="entry name" value="Enolase_N"/>
    <property type="match status" value="1"/>
</dbReference>
<dbReference type="SUPFAM" id="SSF51604">
    <property type="entry name" value="Enolase C-terminal domain-like"/>
    <property type="match status" value="1"/>
</dbReference>
<dbReference type="SUPFAM" id="SSF54826">
    <property type="entry name" value="Enolase N-terminal domain-like"/>
    <property type="match status" value="1"/>
</dbReference>
<dbReference type="PROSITE" id="PS00164">
    <property type="entry name" value="ENOLASE"/>
    <property type="match status" value="1"/>
</dbReference>
<keyword id="KW-0963">Cytoplasm</keyword>
<keyword id="KW-0324">Glycolysis</keyword>
<keyword id="KW-0456">Lyase</keyword>
<keyword id="KW-0460">Magnesium</keyword>
<keyword id="KW-0479">Metal-binding</keyword>
<keyword id="KW-0964">Secreted</keyword>
<comment type="function">
    <text evidence="1">Catalyzes the reversible conversion of 2-phosphoglycerate (2-PG) into phosphoenolpyruvate (PEP). It is essential for the degradation of carbohydrates via glycolysis.</text>
</comment>
<comment type="catalytic activity">
    <reaction evidence="1">
        <text>(2R)-2-phosphoglycerate = phosphoenolpyruvate + H2O</text>
        <dbReference type="Rhea" id="RHEA:10164"/>
        <dbReference type="ChEBI" id="CHEBI:15377"/>
        <dbReference type="ChEBI" id="CHEBI:58289"/>
        <dbReference type="ChEBI" id="CHEBI:58702"/>
        <dbReference type="EC" id="4.2.1.11"/>
    </reaction>
</comment>
<comment type="cofactor">
    <cofactor evidence="1">
        <name>Mg(2+)</name>
        <dbReference type="ChEBI" id="CHEBI:18420"/>
    </cofactor>
    <text evidence="1">Binds a second Mg(2+) ion via substrate during catalysis.</text>
</comment>
<comment type="pathway">
    <text evidence="1">Carbohydrate degradation; glycolysis; pyruvate from D-glyceraldehyde 3-phosphate: step 4/5.</text>
</comment>
<comment type="subcellular location">
    <subcellularLocation>
        <location evidence="1">Cytoplasm</location>
    </subcellularLocation>
    <subcellularLocation>
        <location evidence="1">Secreted</location>
    </subcellularLocation>
    <subcellularLocation>
        <location evidence="1">Cell surface</location>
    </subcellularLocation>
    <text evidence="1">Fractions of enolase are present in both the cytoplasm and on the cell surface.</text>
</comment>
<comment type="similarity">
    <text evidence="1">Belongs to the enolase family.</text>
</comment>
<protein>
    <recommendedName>
        <fullName evidence="1">Enolase</fullName>
        <ecNumber evidence="1">4.2.1.11</ecNumber>
    </recommendedName>
    <alternativeName>
        <fullName evidence="1">2-phospho-D-glycerate hydro-lyase</fullName>
    </alternativeName>
    <alternativeName>
        <fullName evidence="1">2-phosphoglycerate dehydratase</fullName>
    </alternativeName>
</protein>
<reference key="1">
    <citation type="submission" date="2009-04" db="EMBL/GenBank/DDBJ databases">
        <title>Genome sequence of Bacillus anthracis A0248.</title>
        <authorList>
            <person name="Dodson R.J."/>
            <person name="Munk A.C."/>
            <person name="Bruce D."/>
            <person name="Detter C."/>
            <person name="Tapia R."/>
            <person name="Sutton G."/>
            <person name="Sims D."/>
            <person name="Brettin T."/>
        </authorList>
    </citation>
    <scope>NUCLEOTIDE SEQUENCE [LARGE SCALE GENOMIC DNA]</scope>
    <source>
        <strain>A0248</strain>
    </source>
</reference>
<accession>C3P0A3</accession>
<evidence type="ECO:0000255" key="1">
    <source>
        <dbReference type="HAMAP-Rule" id="MF_00318"/>
    </source>
</evidence>
<organism>
    <name type="scientific">Bacillus anthracis (strain A0248)</name>
    <dbReference type="NCBI Taxonomy" id="592021"/>
    <lineage>
        <taxon>Bacteria</taxon>
        <taxon>Bacillati</taxon>
        <taxon>Bacillota</taxon>
        <taxon>Bacilli</taxon>
        <taxon>Bacillales</taxon>
        <taxon>Bacillaceae</taxon>
        <taxon>Bacillus</taxon>
        <taxon>Bacillus cereus group</taxon>
    </lineage>
</organism>
<proteinExistence type="inferred from homology"/>
<feature type="chain" id="PRO_1000132981" description="Enolase">
    <location>
        <begin position="1"/>
        <end position="431"/>
    </location>
</feature>
<feature type="active site" description="Proton donor" evidence="1">
    <location>
        <position position="205"/>
    </location>
</feature>
<feature type="active site" description="Proton acceptor" evidence="1">
    <location>
        <position position="340"/>
    </location>
</feature>
<feature type="binding site" evidence="1">
    <location>
        <position position="163"/>
    </location>
    <ligand>
        <name>(2R)-2-phosphoglycerate</name>
        <dbReference type="ChEBI" id="CHEBI:58289"/>
    </ligand>
</feature>
<feature type="binding site" evidence="1">
    <location>
        <position position="242"/>
    </location>
    <ligand>
        <name>Mg(2+)</name>
        <dbReference type="ChEBI" id="CHEBI:18420"/>
    </ligand>
</feature>
<feature type="binding site" evidence="1">
    <location>
        <position position="288"/>
    </location>
    <ligand>
        <name>Mg(2+)</name>
        <dbReference type="ChEBI" id="CHEBI:18420"/>
    </ligand>
</feature>
<feature type="binding site" evidence="1">
    <location>
        <position position="315"/>
    </location>
    <ligand>
        <name>Mg(2+)</name>
        <dbReference type="ChEBI" id="CHEBI:18420"/>
    </ligand>
</feature>
<feature type="binding site" evidence="1">
    <location>
        <position position="340"/>
    </location>
    <ligand>
        <name>(2R)-2-phosphoglycerate</name>
        <dbReference type="ChEBI" id="CHEBI:58289"/>
    </ligand>
</feature>
<feature type="binding site" evidence="1">
    <location>
        <position position="369"/>
    </location>
    <ligand>
        <name>(2R)-2-phosphoglycerate</name>
        <dbReference type="ChEBI" id="CHEBI:58289"/>
    </ligand>
</feature>
<feature type="binding site" evidence="1">
    <location>
        <position position="370"/>
    </location>
    <ligand>
        <name>(2R)-2-phosphoglycerate</name>
        <dbReference type="ChEBI" id="CHEBI:58289"/>
    </ligand>
</feature>
<feature type="binding site" evidence="1">
    <location>
        <position position="391"/>
    </location>
    <ligand>
        <name>(2R)-2-phosphoglycerate</name>
        <dbReference type="ChEBI" id="CHEBI:58289"/>
    </ligand>
</feature>
<sequence>MSTIIDVYAREVLDSRGNPTVEVEVYTESGAFGRAIVPSGASTGEHEAVELRDGDKSRYLGKGVMNAVNNVNEAIAPEIVGFDVTDQAGIDRAMIELDGTPNKGKLGANAILGVSMAVAHAAADFVGLPLYRYLGGFNAKQLPTPMMNIINGGSHADNNVDFQEFMILPVGAPTFKESIRMGAEVFHALKAVLHDKGLNTAVGDEGGFAPNLGSNREALEVIIEAIEKAGYKAGENVFLGMDVASSEFYNKETGKYDLAGEGRTGLTSAEMVDFYEELCKDFPIISIEDGLDENDWDGHKLLTERIGDKVQLVGDDLFVTNTQKLAEGIEKGISNSILIKVNQIGTLTETFEAIEMAKRAGYTAVVSHRSGETEDATIADIAVATNAGQIKTGSMSRTDRIAKYNQLLRIEDELGEIAVYDGIKSFYNIKR</sequence>
<name>ENO_BACAA</name>
<gene>
    <name evidence="1" type="primary">eno</name>
    <name type="ordered locus">BAA_5394</name>
</gene>